<evidence type="ECO:0000305" key="1"/>
<feature type="chain" id="PRO_0000219915" description="Protochlorophyllide reductase">
    <location>
        <begin position="1" status="less than"/>
        <end position="313"/>
    </location>
</feature>
<feature type="non-terminal residue">
    <location>
        <position position="1"/>
    </location>
</feature>
<sequence length="313" mass="33797">VVVITGASSGLGLAAAKALAETGKWHVVMACRDFLKASKAAKAAGMADGSYTVMHLDLASLDSVRQFVDAFRRAEMPLDVLVCNAAIYRPTARKPTFTAEGVEMSVGVNHLGHFLLARLLLEDLQKSDYPSRRLVIVGSITGNDNTLAGNVPPKANLGDLRGLAGGLTGASGSAMIDGDESFDGAKAYKDSKVCNMLTMQEFHRRYHEDTGITFSSLYPGCIATTGLFREHIPLFRTLFPPFQKFVTKGFVSEAESGKRLAQVVGEPSLTKSGVYWSWNKDSASFENQLSQEASDPEKARKVWELSEKLVGLA</sequence>
<proteinExistence type="evidence at transcript level"/>
<comment type="function">
    <text>Phototransformation of protochlorophyllide (Pchlide) to chlorophyllide (Chlide).</text>
</comment>
<comment type="catalytic activity">
    <reaction>
        <text>chlorophyllide a + NADP(+) = protochlorophyllide a + NADPH + H(+)</text>
        <dbReference type="Rhea" id="RHEA:11132"/>
        <dbReference type="ChEBI" id="CHEBI:15378"/>
        <dbReference type="ChEBI" id="CHEBI:57783"/>
        <dbReference type="ChEBI" id="CHEBI:58349"/>
        <dbReference type="ChEBI" id="CHEBI:83348"/>
        <dbReference type="ChEBI" id="CHEBI:83350"/>
        <dbReference type="EC" id="1.3.1.33"/>
    </reaction>
</comment>
<comment type="pathway">
    <text>Porphyrin-containing compound metabolism; chlorophyll biosynthesis.</text>
</comment>
<comment type="subcellular location">
    <subcellularLocation>
        <location>Plastid</location>
        <location>Chloroplast</location>
    </subcellularLocation>
</comment>
<comment type="similarity">
    <text evidence="1">Belongs to the short-chain dehydrogenases/reductases (SDR) family. POR subfamily.</text>
</comment>
<protein>
    <recommendedName>
        <fullName>Protochlorophyllide reductase</fullName>
        <shortName>PCR</shortName>
        <ecNumber>1.3.1.33</ecNumber>
    </recommendedName>
    <alternativeName>
        <fullName>NADPH-protochlorophyllide oxidoreductase</fullName>
        <shortName>POR</shortName>
    </alternativeName>
</protein>
<reference key="1">
    <citation type="journal article" date="1990" name="Biochem. J.">
        <title>Cloning and sequencing of protochlorophyllide reductase.</title>
        <authorList>
            <person name="Darrah P.M."/>
            <person name="Kay S.A."/>
            <person name="Teakle G.R."/>
            <person name="Griffiths W.T."/>
        </authorList>
    </citation>
    <scope>NUCLEOTIDE SEQUENCE [MRNA]</scope>
    <source>
        <strain>cv. Peniarth</strain>
        <tissue>Etiolated leaf</tissue>
    </source>
</reference>
<keyword id="KW-0149">Chlorophyll biosynthesis</keyword>
<keyword id="KW-0150">Chloroplast</keyword>
<keyword id="KW-0521">NADP</keyword>
<keyword id="KW-0560">Oxidoreductase</keyword>
<keyword id="KW-0602">Photosynthesis</keyword>
<keyword id="KW-0934">Plastid</keyword>
<accession>P15904</accession>
<organism>
    <name type="scientific">Avena sativa</name>
    <name type="common">Oat</name>
    <dbReference type="NCBI Taxonomy" id="4498"/>
    <lineage>
        <taxon>Eukaryota</taxon>
        <taxon>Viridiplantae</taxon>
        <taxon>Streptophyta</taxon>
        <taxon>Embryophyta</taxon>
        <taxon>Tracheophyta</taxon>
        <taxon>Spermatophyta</taxon>
        <taxon>Magnoliopsida</taxon>
        <taxon>Liliopsida</taxon>
        <taxon>Poales</taxon>
        <taxon>Poaceae</taxon>
        <taxon>BOP clade</taxon>
        <taxon>Pooideae</taxon>
        <taxon>Poodae</taxon>
        <taxon>Poeae</taxon>
        <taxon>Poeae Chloroplast Group 1 (Aveneae type)</taxon>
        <taxon>Aveninae</taxon>
        <taxon>Avena</taxon>
    </lineage>
</organism>
<dbReference type="EC" id="1.3.1.33"/>
<dbReference type="EMBL" id="X17067">
    <property type="protein sequence ID" value="CAA34913.1"/>
    <property type="molecule type" value="mRNA"/>
</dbReference>
<dbReference type="PIR" id="S08406">
    <property type="entry name" value="S08406"/>
</dbReference>
<dbReference type="SMR" id="P15904"/>
<dbReference type="BRENDA" id="1.3.1.33">
    <property type="organism ID" value="588"/>
</dbReference>
<dbReference type="UniPathway" id="UPA00668"/>
<dbReference type="GO" id="GO:0009507">
    <property type="term" value="C:chloroplast"/>
    <property type="evidence" value="ECO:0007669"/>
    <property type="project" value="UniProtKB-SubCell"/>
</dbReference>
<dbReference type="GO" id="GO:0016630">
    <property type="term" value="F:protochlorophyllide reductase activity"/>
    <property type="evidence" value="ECO:0007669"/>
    <property type="project" value="UniProtKB-EC"/>
</dbReference>
<dbReference type="GO" id="GO:0015995">
    <property type="term" value="P:chlorophyll biosynthetic process"/>
    <property type="evidence" value="ECO:0007669"/>
    <property type="project" value="UniProtKB-UniPathway"/>
</dbReference>
<dbReference type="GO" id="GO:0015979">
    <property type="term" value="P:photosynthesis"/>
    <property type="evidence" value="ECO:0007669"/>
    <property type="project" value="UniProtKB-KW"/>
</dbReference>
<dbReference type="CDD" id="cd09810">
    <property type="entry name" value="LPOR_like_SDR_c_like"/>
    <property type="match status" value="1"/>
</dbReference>
<dbReference type="Gene3D" id="3.40.50.720">
    <property type="entry name" value="NAD(P)-binding Rossmann-like Domain"/>
    <property type="match status" value="1"/>
</dbReference>
<dbReference type="InterPro" id="IPR036291">
    <property type="entry name" value="NAD(P)-bd_dom_sf"/>
</dbReference>
<dbReference type="InterPro" id="IPR005979">
    <property type="entry name" value="Prochl_reduct"/>
</dbReference>
<dbReference type="InterPro" id="IPR002347">
    <property type="entry name" value="SDR_fam"/>
</dbReference>
<dbReference type="NCBIfam" id="TIGR01289">
    <property type="entry name" value="LPOR"/>
    <property type="match status" value="1"/>
</dbReference>
<dbReference type="PANTHER" id="PTHR44419:SF6">
    <property type="entry name" value="PROTOCHLOROPHYLLIDE REDUCTASE A, CHLOROPLASTIC"/>
    <property type="match status" value="1"/>
</dbReference>
<dbReference type="PANTHER" id="PTHR44419">
    <property type="entry name" value="PROTOCHLOROPHYLLIDE REDUCTASE C, CHLOROPLASTIC"/>
    <property type="match status" value="1"/>
</dbReference>
<dbReference type="Pfam" id="PF00106">
    <property type="entry name" value="adh_short"/>
    <property type="match status" value="1"/>
</dbReference>
<dbReference type="PRINTS" id="PR00081">
    <property type="entry name" value="GDHRDH"/>
</dbReference>
<dbReference type="SUPFAM" id="SSF51735">
    <property type="entry name" value="NAD(P)-binding Rossmann-fold domains"/>
    <property type="match status" value="1"/>
</dbReference>
<name>POR_AVESA</name>